<dbReference type="EMBL" id="AP005294">
    <property type="protein sequence ID" value="BAD10267.1"/>
    <property type="status" value="ALT_INIT"/>
    <property type="molecule type" value="Genomic_DNA"/>
</dbReference>
<dbReference type="EMBL" id="AP008208">
    <property type="protein sequence ID" value="BAF07771.2"/>
    <property type="status" value="ALT_SEQ"/>
    <property type="molecule type" value="Genomic_DNA"/>
</dbReference>
<dbReference type="EMBL" id="AP014958">
    <property type="status" value="NOT_ANNOTATED_CDS"/>
    <property type="molecule type" value="Genomic_DNA"/>
</dbReference>
<dbReference type="EMBL" id="CM000139">
    <property type="status" value="NOT_ANNOTATED_CDS"/>
    <property type="molecule type" value="Genomic_DNA"/>
</dbReference>
<dbReference type="RefSeq" id="XP_015627049.1">
    <property type="nucleotide sequence ID" value="XM_015771563.1"/>
</dbReference>
<dbReference type="SMR" id="Q6Z2W3"/>
<dbReference type="FunCoup" id="Q6Z2W3">
    <property type="interactions" value="2044"/>
</dbReference>
<dbReference type="STRING" id="39947.Q6Z2W3"/>
<dbReference type="PaxDb" id="39947-Q6Z2W3"/>
<dbReference type="KEGG" id="dosa:Os02g0141100"/>
<dbReference type="eggNOG" id="ENOG502QV9B">
    <property type="taxonomic scope" value="Eukaryota"/>
</dbReference>
<dbReference type="HOGENOM" id="CLU_002626_0_0_1"/>
<dbReference type="InParanoid" id="Q6Z2W3"/>
<dbReference type="OrthoDB" id="2016915at2759"/>
<dbReference type="Proteomes" id="UP000000763">
    <property type="component" value="Chromosome 2"/>
</dbReference>
<dbReference type="Proteomes" id="UP000007752">
    <property type="component" value="Chromosome 2"/>
</dbReference>
<dbReference type="Proteomes" id="UP000059680">
    <property type="component" value="Chromosome 2"/>
</dbReference>
<dbReference type="GO" id="GO:0005634">
    <property type="term" value="C:nucleus"/>
    <property type="evidence" value="ECO:0007669"/>
    <property type="project" value="UniProtKB-SubCell"/>
</dbReference>
<dbReference type="GO" id="GO:0003677">
    <property type="term" value="F:DNA binding"/>
    <property type="evidence" value="ECO:0007669"/>
    <property type="project" value="UniProtKB-KW"/>
</dbReference>
<dbReference type="GO" id="GO:0009734">
    <property type="term" value="P:auxin-activated signaling pathway"/>
    <property type="evidence" value="ECO:0007669"/>
    <property type="project" value="UniProtKB-KW"/>
</dbReference>
<dbReference type="GO" id="GO:0006355">
    <property type="term" value="P:regulation of DNA-templated transcription"/>
    <property type="evidence" value="ECO:0007669"/>
    <property type="project" value="InterPro"/>
</dbReference>
<dbReference type="CDD" id="cd10017">
    <property type="entry name" value="B3_DNA"/>
    <property type="match status" value="1"/>
</dbReference>
<dbReference type="FunFam" id="2.30.30.1040:FF:000001">
    <property type="entry name" value="Auxin response factor"/>
    <property type="match status" value="1"/>
</dbReference>
<dbReference type="FunFam" id="2.40.330.10:FF:000001">
    <property type="entry name" value="Auxin response factor"/>
    <property type="match status" value="1"/>
</dbReference>
<dbReference type="FunFam" id="3.10.20.90:FF:000047">
    <property type="entry name" value="Auxin response factor"/>
    <property type="match status" value="1"/>
</dbReference>
<dbReference type="Gene3D" id="2.30.30.1040">
    <property type="match status" value="1"/>
</dbReference>
<dbReference type="Gene3D" id="2.40.330.10">
    <property type="entry name" value="DNA-binding pseudobarrel domain"/>
    <property type="match status" value="1"/>
</dbReference>
<dbReference type="Gene3D" id="3.10.20.90">
    <property type="entry name" value="Phosphatidylinositol 3-kinase Catalytic Subunit, Chain A, domain 1"/>
    <property type="match status" value="1"/>
</dbReference>
<dbReference type="InterPro" id="IPR010525">
    <property type="entry name" value="ARF_dom"/>
</dbReference>
<dbReference type="InterPro" id="IPR044835">
    <property type="entry name" value="ARF_plant"/>
</dbReference>
<dbReference type="InterPro" id="IPR033389">
    <property type="entry name" value="AUX/IAA_dom"/>
</dbReference>
<dbReference type="InterPro" id="IPR003340">
    <property type="entry name" value="B3_DNA-bd"/>
</dbReference>
<dbReference type="InterPro" id="IPR015300">
    <property type="entry name" value="DNA-bd_pseudobarrel_sf"/>
</dbReference>
<dbReference type="InterPro" id="IPR053793">
    <property type="entry name" value="PB1-like"/>
</dbReference>
<dbReference type="PANTHER" id="PTHR31384">
    <property type="entry name" value="AUXIN RESPONSE FACTOR 4-RELATED"/>
    <property type="match status" value="1"/>
</dbReference>
<dbReference type="PANTHER" id="PTHR31384:SF14">
    <property type="entry name" value="AUXIN RESPONSE FACTOR 5"/>
    <property type="match status" value="1"/>
</dbReference>
<dbReference type="Pfam" id="PF06507">
    <property type="entry name" value="ARF_AD"/>
    <property type="match status" value="1"/>
</dbReference>
<dbReference type="Pfam" id="PF02309">
    <property type="entry name" value="AUX_IAA"/>
    <property type="match status" value="1"/>
</dbReference>
<dbReference type="Pfam" id="PF02362">
    <property type="entry name" value="B3"/>
    <property type="match status" value="1"/>
</dbReference>
<dbReference type="SMART" id="SM01019">
    <property type="entry name" value="B3"/>
    <property type="match status" value="1"/>
</dbReference>
<dbReference type="SUPFAM" id="SSF54277">
    <property type="entry name" value="CAD &amp; PB1 domains"/>
    <property type="match status" value="1"/>
</dbReference>
<dbReference type="SUPFAM" id="SSF101936">
    <property type="entry name" value="DNA-binding pseudobarrel domain"/>
    <property type="match status" value="1"/>
</dbReference>
<dbReference type="PROSITE" id="PS50863">
    <property type="entry name" value="B3"/>
    <property type="match status" value="1"/>
</dbReference>
<dbReference type="PROSITE" id="PS51745">
    <property type="entry name" value="PB1"/>
    <property type="match status" value="1"/>
</dbReference>
<reference key="1">
    <citation type="journal article" date="2005" name="Nature">
        <title>The map-based sequence of the rice genome.</title>
        <authorList>
            <consortium name="International rice genome sequencing project (IRGSP)"/>
        </authorList>
    </citation>
    <scope>NUCLEOTIDE SEQUENCE [LARGE SCALE GENOMIC DNA]</scope>
    <source>
        <strain>cv. Nipponbare</strain>
    </source>
</reference>
<reference key="2">
    <citation type="journal article" date="2008" name="Nucleic Acids Res.">
        <title>The rice annotation project database (RAP-DB): 2008 update.</title>
        <authorList>
            <consortium name="The rice annotation project (RAP)"/>
        </authorList>
    </citation>
    <scope>GENOME REANNOTATION</scope>
    <source>
        <strain>cv. Nipponbare</strain>
    </source>
</reference>
<reference key="3">
    <citation type="journal article" date="2013" name="Rice">
        <title>Improvement of the Oryza sativa Nipponbare reference genome using next generation sequence and optical map data.</title>
        <authorList>
            <person name="Kawahara Y."/>
            <person name="de la Bastide M."/>
            <person name="Hamilton J.P."/>
            <person name="Kanamori H."/>
            <person name="McCombie W.R."/>
            <person name="Ouyang S."/>
            <person name="Schwartz D.C."/>
            <person name="Tanaka T."/>
            <person name="Wu J."/>
            <person name="Zhou S."/>
            <person name="Childs K.L."/>
            <person name="Davidson R.M."/>
            <person name="Lin H."/>
            <person name="Quesada-Ocampo L."/>
            <person name="Vaillancourt B."/>
            <person name="Sakai H."/>
            <person name="Lee S.S."/>
            <person name="Kim J."/>
            <person name="Numa H."/>
            <person name="Itoh T."/>
            <person name="Buell C.R."/>
            <person name="Matsumoto T."/>
        </authorList>
    </citation>
    <scope>GENOME REANNOTATION</scope>
    <source>
        <strain>cv. Nipponbare</strain>
    </source>
</reference>
<reference key="4">
    <citation type="journal article" date="2005" name="PLoS Biol.">
        <title>The genomes of Oryza sativa: a history of duplications.</title>
        <authorList>
            <person name="Yu J."/>
            <person name="Wang J."/>
            <person name="Lin W."/>
            <person name="Li S."/>
            <person name="Li H."/>
            <person name="Zhou J."/>
            <person name="Ni P."/>
            <person name="Dong W."/>
            <person name="Hu S."/>
            <person name="Zeng C."/>
            <person name="Zhang J."/>
            <person name="Zhang Y."/>
            <person name="Li R."/>
            <person name="Xu Z."/>
            <person name="Li S."/>
            <person name="Li X."/>
            <person name="Zheng H."/>
            <person name="Cong L."/>
            <person name="Lin L."/>
            <person name="Yin J."/>
            <person name="Geng J."/>
            <person name="Li G."/>
            <person name="Shi J."/>
            <person name="Liu J."/>
            <person name="Lv H."/>
            <person name="Li J."/>
            <person name="Wang J."/>
            <person name="Deng Y."/>
            <person name="Ran L."/>
            <person name="Shi X."/>
            <person name="Wang X."/>
            <person name="Wu Q."/>
            <person name="Li C."/>
            <person name="Ren X."/>
            <person name="Wang J."/>
            <person name="Wang X."/>
            <person name="Li D."/>
            <person name="Liu D."/>
            <person name="Zhang X."/>
            <person name="Ji Z."/>
            <person name="Zhao W."/>
            <person name="Sun Y."/>
            <person name="Zhang Z."/>
            <person name="Bao J."/>
            <person name="Han Y."/>
            <person name="Dong L."/>
            <person name="Ji J."/>
            <person name="Chen P."/>
            <person name="Wu S."/>
            <person name="Liu J."/>
            <person name="Xiao Y."/>
            <person name="Bu D."/>
            <person name="Tan J."/>
            <person name="Yang L."/>
            <person name="Ye C."/>
            <person name="Zhang J."/>
            <person name="Xu J."/>
            <person name="Zhou Y."/>
            <person name="Yu Y."/>
            <person name="Zhang B."/>
            <person name="Zhuang S."/>
            <person name="Wei H."/>
            <person name="Liu B."/>
            <person name="Lei M."/>
            <person name="Yu H."/>
            <person name="Li Y."/>
            <person name="Xu H."/>
            <person name="Wei S."/>
            <person name="He X."/>
            <person name="Fang L."/>
            <person name="Zhang Z."/>
            <person name="Zhang Y."/>
            <person name="Huang X."/>
            <person name="Su Z."/>
            <person name="Tong W."/>
            <person name="Li J."/>
            <person name="Tong Z."/>
            <person name="Li S."/>
            <person name="Ye J."/>
            <person name="Wang L."/>
            <person name="Fang L."/>
            <person name="Lei T."/>
            <person name="Chen C.-S."/>
            <person name="Chen H.-C."/>
            <person name="Xu Z."/>
            <person name="Li H."/>
            <person name="Huang H."/>
            <person name="Zhang F."/>
            <person name="Xu H."/>
            <person name="Li N."/>
            <person name="Zhao C."/>
            <person name="Li S."/>
            <person name="Dong L."/>
            <person name="Huang Y."/>
            <person name="Li L."/>
            <person name="Xi Y."/>
            <person name="Qi Q."/>
            <person name="Li W."/>
            <person name="Zhang B."/>
            <person name="Hu W."/>
            <person name="Zhang Y."/>
            <person name="Tian X."/>
            <person name="Jiao Y."/>
            <person name="Liang X."/>
            <person name="Jin J."/>
            <person name="Gao L."/>
            <person name="Zheng W."/>
            <person name="Hao B."/>
            <person name="Liu S.-M."/>
            <person name="Wang W."/>
            <person name="Yuan L."/>
            <person name="Cao M."/>
            <person name="McDermott J."/>
            <person name="Samudrala R."/>
            <person name="Wang J."/>
            <person name="Wong G.K.-S."/>
            <person name="Yang H."/>
        </authorList>
    </citation>
    <scope>NUCLEOTIDE SEQUENCE [LARGE SCALE GENOMIC DNA]</scope>
    <source>
        <strain>cv. Nipponbare</strain>
    </source>
</reference>
<reference key="5">
    <citation type="journal article" date="2007" name="Gene">
        <title>Genome-wide analysis of the auxin response factors (ARF) gene family in rice (Oryza sativa).</title>
        <authorList>
            <person name="Wang D."/>
            <person name="Pei K."/>
            <person name="Fu Y."/>
            <person name="Sun Z."/>
            <person name="Li S."/>
            <person name="Liu H."/>
            <person name="Tang K."/>
            <person name="Han B."/>
            <person name="Tao Y."/>
        </authorList>
    </citation>
    <scope>GENE FAMILY</scope>
    <scope>TISSUE SPECIFICITY</scope>
    <scope>INDUCTION</scope>
    <scope>NOMENCLATURE</scope>
</reference>
<proteinExistence type="evidence at transcript level"/>
<gene>
    <name type="primary">ARF5</name>
    <name type="ordered locus">Os02g0141100</name>
    <name type="ordered locus">LOC_Os02g04810</name>
    <name type="ORF">OJ1679_B08.29</name>
    <name type="ORF">OsJ_005181</name>
</gene>
<name>ARFE_ORYSJ</name>
<accession>Q6Z2W3</accession>
<accession>A3A309</accession>
<accession>Q0E417</accession>
<feature type="chain" id="PRO_0000299258" description="Auxin response factor 5">
    <location>
        <begin position="1"/>
        <end position="1142"/>
    </location>
</feature>
<feature type="domain" description="PB1" evidence="3">
    <location>
        <begin position="1009"/>
        <end position="1093"/>
    </location>
</feature>
<feature type="DNA-binding region" description="TF-B3" evidence="2">
    <location>
        <begin position="148"/>
        <end position="250"/>
    </location>
</feature>
<feature type="region of interest" description="Disordered" evidence="4">
    <location>
        <begin position="1114"/>
        <end position="1142"/>
    </location>
</feature>
<comment type="function">
    <text>Auxin response factors (ARFs) are transcriptional factors that bind specifically to the DNA sequence 5'-TGTCTC-3' found in the auxin-responsive promoter elements (AuxREs).</text>
</comment>
<comment type="subunit">
    <text evidence="1">Homodimers and heterodimers.</text>
</comment>
<comment type="subcellular location">
    <subcellularLocation>
        <location evidence="2">Nucleus</location>
    </subcellularLocation>
</comment>
<comment type="tissue specificity">
    <text evidence="5">Expressed in roots, culms, leaves and young panicles.</text>
</comment>
<comment type="induction">
    <text evidence="5">Down-regulated by auxin under light condition.</text>
</comment>
<comment type="domain">
    <text>Interactions between auxin response factors (ARFs) and Aux/IAA proteins occur through their C-terminal dimerization domains III and IV.</text>
</comment>
<comment type="similarity">
    <text evidence="6">Belongs to the ARF family.</text>
</comment>
<comment type="sequence caution" evidence="6">
    <conflict type="erroneous initiation">
        <sequence resource="EMBL-CDS" id="BAD10267"/>
    </conflict>
</comment>
<comment type="sequence caution" evidence="6">
    <conflict type="erroneous gene model prediction">
        <sequence resource="EMBL-CDS" id="BAF07771"/>
    </conflict>
</comment>
<protein>
    <recommendedName>
        <fullName>Auxin response factor 5</fullName>
    </recommendedName>
</protein>
<organism>
    <name type="scientific">Oryza sativa subsp. japonica</name>
    <name type="common">Rice</name>
    <dbReference type="NCBI Taxonomy" id="39947"/>
    <lineage>
        <taxon>Eukaryota</taxon>
        <taxon>Viridiplantae</taxon>
        <taxon>Streptophyta</taxon>
        <taxon>Embryophyta</taxon>
        <taxon>Tracheophyta</taxon>
        <taxon>Spermatophyta</taxon>
        <taxon>Magnoliopsida</taxon>
        <taxon>Liliopsida</taxon>
        <taxon>Poales</taxon>
        <taxon>Poaceae</taxon>
        <taxon>BOP clade</taxon>
        <taxon>Oryzoideae</taxon>
        <taxon>Oryzeae</taxon>
        <taxon>Oryzinae</taxon>
        <taxon>Oryza</taxon>
        <taxon>Oryza sativa</taxon>
    </lineage>
</organism>
<evidence type="ECO:0000250" key="1"/>
<evidence type="ECO:0000255" key="2">
    <source>
        <dbReference type="PROSITE-ProRule" id="PRU00326"/>
    </source>
</evidence>
<evidence type="ECO:0000255" key="3">
    <source>
        <dbReference type="PROSITE-ProRule" id="PRU01081"/>
    </source>
</evidence>
<evidence type="ECO:0000256" key="4">
    <source>
        <dbReference type="SAM" id="MobiDB-lite"/>
    </source>
</evidence>
<evidence type="ECO:0000269" key="5">
    <source>
    </source>
</evidence>
<evidence type="ECO:0000305" key="6"/>
<sequence length="1142" mass="126760">MASMKQQQTPASSAVTAAAAASSSATAAVAACEGERKAAAINSELWHACAGPLVSLPPVGSLVVYFPQGHSEQVAASMQKDVDAHVPSYPNLPSKLICLLHGVNLHADPDTDEVYAQMTLQPVNTYGKEALQISELALKQARPQMEFFCKTLTASDTSTHGGFSVPRRAAEKIFPPLDFSMQPPAQELQARDIHDNVWTFRHIYRGQPKRHLLTTGWSLFVSGKRLFAGDSVIVVRDEKHQLLLGIRRANRQPTNISSSVLSSDSMHIGVLAAAAHAAANSSPFTIFYNPRASPTEFVIPFAKYQKALYSNQISLGMRFRMMFETEELGTRRYMGTITGISDLDPVRWKNSQWRNLQVGWDESAAGERRNRVSIWEIEPVAAPFFLCPQPFFGVKRPRQLDDESEMENLFKRAMPWLGEEVCIKDTQNQNSTAPGLSLVQWMNMNRQQSSSLANTAAQSEYLQALGNPAMQNLAADELARQLYVQNNLLQQNCIQFNSPKLPQQMQTMNDLSKAAIPLNQLGAIINPQDQKQDAVNHQRQQNSIQVIPLSQAQSNLVQAQVIVQNQMQQQKPSPTQNPQRINGQRLLLSHQQKDQNLQLQQQLLLQQKQQLQQQQQQQQQNQQQLNKSLGQLVNLASQQSKLFDEELQLQILQKLQQQSLMSQSTSTLSQPPLIQEQQKLITDMQKQLSNSHSLAQQQMMPQQEIKPSLQATPLLPTVQQEQQQKLLQKQVSLADVSGVAFQPISSTNVIPKTGGAMIISGATQSVVTEEMPSCSTSPSTANGNHFTQSTKNRHCINTERLPPSTAPMLIPTSIDAVTATPLMTKELPKPNNNVKQSVVNSKLPNVAPGPQNCINHALQTDNLETSSSATSLCPSRTDGLVHQGFPSSNFNQHQMFKDALPDVEMEGVDPSNSGLFGINNDNLLGFPIETEDLLINALDSVKYQNHISTDVENNYPMQKDALQEISTSMVSQSFGQSDMAFNSIDSAINDGAFLNKNSWPAAPLLQRMRTFTKVYKRGAVGRSIDIGRYSGYEELKHALARMFGIEGQLEDRQRIGWKLVYKDHEDDILLLGDDPWEEFVNCVRCIRILSPQEVQQMSLDGDLGSNVLPNQACSSSDGVNGWRPRCDQNPGNPSIGPYDQFE</sequence>
<keyword id="KW-0927">Auxin signaling pathway</keyword>
<keyword id="KW-0238">DNA-binding</keyword>
<keyword id="KW-0539">Nucleus</keyword>
<keyword id="KW-1185">Reference proteome</keyword>
<keyword id="KW-0804">Transcription</keyword>
<keyword id="KW-0805">Transcription regulation</keyword>